<name>RTCA_PYRHO</name>
<sequence length="341" mass="37167">MITIDGSYGEGGGQILRTSVALSTITGEPVRIVNIRANRPNPGLRPQHLHAILALKHLANAEVKGAHVGSRELVFIPKKLEAKEISIDIGTAGSITLVLQALLPAMVFAREKVKFRITGGTDVSWSPPVDYLSNVTLFALEKIGIHGEIRVIRRGHYPKGGGIVEGYVEPWNEKRELVAKEYSRIIKIEGISHATNLPSHVAERQARAAKDELLQLKVPIEIRTEISRSIGPGSGIVVWAETDCLRLGGDALGKKGKPAEIVGKEAAQELLDQLKPGHCVDKFLGDQLIPFLAFSGGVIWVSEITNHLKTNIWVVESFLGRIFDVDGNVGEPGKIRVIRRV</sequence>
<feature type="chain" id="PRO_0000156433" description="RNA 3'-terminal phosphate cyclase">
    <location>
        <begin position="1"/>
        <end position="341"/>
    </location>
</feature>
<feature type="active site" description="Tele-AMP-histidine intermediate" evidence="1">
    <location>
        <position position="307"/>
    </location>
</feature>
<feature type="binding site" evidence="1">
    <location>
        <position position="100"/>
    </location>
    <ligand>
        <name>ATP</name>
        <dbReference type="ChEBI" id="CHEBI:30616"/>
    </ligand>
</feature>
<feature type="binding site" evidence="1">
    <location>
        <begin position="283"/>
        <end position="287"/>
    </location>
    <ligand>
        <name>ATP</name>
        <dbReference type="ChEBI" id="CHEBI:30616"/>
    </ligand>
</feature>
<feature type="strand" evidence="3">
    <location>
        <begin position="2"/>
        <end position="5"/>
    </location>
</feature>
<feature type="helix" evidence="3">
    <location>
        <begin position="13"/>
        <end position="26"/>
    </location>
</feature>
<feature type="strand" evidence="3">
    <location>
        <begin position="30"/>
        <end position="34"/>
    </location>
</feature>
<feature type="strand" evidence="3">
    <location>
        <begin position="38"/>
        <end position="41"/>
    </location>
</feature>
<feature type="helix" evidence="3">
    <location>
        <begin position="46"/>
        <end position="59"/>
    </location>
</feature>
<feature type="strand" evidence="3">
    <location>
        <begin position="62"/>
        <end position="65"/>
    </location>
</feature>
<feature type="strand" evidence="3">
    <location>
        <begin position="73"/>
        <end position="76"/>
    </location>
</feature>
<feature type="strand" evidence="3">
    <location>
        <begin position="85"/>
        <end position="88"/>
    </location>
</feature>
<feature type="strand" evidence="4">
    <location>
        <begin position="90"/>
        <end position="92"/>
    </location>
</feature>
<feature type="helix" evidence="3">
    <location>
        <begin position="95"/>
        <end position="106"/>
    </location>
</feature>
<feature type="strand" evidence="3">
    <location>
        <begin position="109"/>
        <end position="111"/>
    </location>
</feature>
<feature type="strand" evidence="3">
    <location>
        <begin position="113"/>
        <end position="122"/>
    </location>
</feature>
<feature type="helix" evidence="3">
    <location>
        <begin position="129"/>
        <end position="134"/>
    </location>
</feature>
<feature type="helix" evidence="3">
    <location>
        <begin position="136"/>
        <end position="141"/>
    </location>
</feature>
<feature type="turn" evidence="3">
    <location>
        <begin position="142"/>
        <end position="144"/>
    </location>
</feature>
<feature type="strand" evidence="3">
    <location>
        <begin position="147"/>
        <end position="153"/>
    </location>
</feature>
<feature type="turn" evidence="3">
    <location>
        <begin position="157"/>
        <end position="159"/>
    </location>
</feature>
<feature type="strand" evidence="3">
    <location>
        <begin position="162"/>
        <end position="168"/>
    </location>
</feature>
<feature type="strand" evidence="3">
    <location>
        <begin position="177"/>
        <end position="179"/>
    </location>
</feature>
<feature type="strand" evidence="3">
    <location>
        <begin position="185"/>
        <end position="197"/>
    </location>
</feature>
<feature type="helix" evidence="3">
    <location>
        <begin position="199"/>
        <end position="213"/>
    </location>
</feature>
<feature type="helix" evidence="3">
    <location>
        <begin position="214"/>
        <end position="216"/>
    </location>
</feature>
<feature type="strand" evidence="3">
    <location>
        <begin position="220"/>
        <end position="227"/>
    </location>
</feature>
<feature type="strand" evidence="3">
    <location>
        <begin position="233"/>
        <end position="244"/>
    </location>
</feature>
<feature type="strand" evidence="3">
    <location>
        <begin position="246"/>
        <end position="252"/>
    </location>
</feature>
<feature type="helix" evidence="3">
    <location>
        <begin position="259"/>
        <end position="274"/>
    </location>
</feature>
<feature type="strand" evidence="3">
    <location>
        <begin position="278"/>
        <end position="280"/>
    </location>
</feature>
<feature type="helix" evidence="3">
    <location>
        <begin position="282"/>
        <end position="287"/>
    </location>
</feature>
<feature type="helix" evidence="3">
    <location>
        <begin position="289"/>
        <end position="295"/>
    </location>
</feature>
<feature type="strand" evidence="3">
    <location>
        <begin position="297"/>
        <end position="302"/>
    </location>
</feature>
<feature type="helix" evidence="3">
    <location>
        <begin position="306"/>
        <end position="319"/>
    </location>
</feature>
<feature type="strand" evidence="3">
    <location>
        <begin position="323"/>
        <end position="327"/>
    </location>
</feature>
<feature type="strand" evidence="3">
    <location>
        <begin position="333"/>
        <end position="339"/>
    </location>
</feature>
<evidence type="ECO:0000250" key="1"/>
<evidence type="ECO:0000305" key="2"/>
<evidence type="ECO:0007829" key="3">
    <source>
        <dbReference type="PDB" id="4O89"/>
    </source>
</evidence>
<evidence type="ECO:0007829" key="4">
    <source>
        <dbReference type="PDB" id="4O8J"/>
    </source>
</evidence>
<protein>
    <recommendedName>
        <fullName>RNA 3'-terminal phosphate cyclase</fullName>
        <shortName>RNA cyclase</shortName>
        <shortName>RNA-3'-phosphate cyclase</shortName>
        <ecNumber>6.5.1.4</ecNumber>
    </recommendedName>
</protein>
<organism>
    <name type="scientific">Pyrococcus horikoshii (strain ATCC 700860 / DSM 12428 / JCM 9974 / NBRC 100139 / OT-3)</name>
    <dbReference type="NCBI Taxonomy" id="70601"/>
    <lineage>
        <taxon>Archaea</taxon>
        <taxon>Methanobacteriati</taxon>
        <taxon>Methanobacteriota</taxon>
        <taxon>Thermococci</taxon>
        <taxon>Thermococcales</taxon>
        <taxon>Thermococcaceae</taxon>
        <taxon>Pyrococcus</taxon>
    </lineage>
</organism>
<keyword id="KW-0002">3D-structure</keyword>
<keyword id="KW-0067">ATP-binding</keyword>
<keyword id="KW-0963">Cytoplasm</keyword>
<keyword id="KW-0436">Ligase</keyword>
<keyword id="KW-0547">Nucleotide-binding</keyword>
<comment type="function">
    <text evidence="1">Catalyzes the conversion of 3'-phosphate to a 2',3'-cyclic phosphodiester at the end of RNA. The mechanism of action of the enzyme occurs in 3 steps: (A) adenylation of the enzyme by ATP; (B) transfer of adenylate to an RNA-N3'P to produce RNA-N3'PP5'A; (C) and attack of the adjacent 2'-hydroxyl on the 3'-phosphorus in the diester linkage to produce the cyclic end product. The biological role of this enzyme is unknown but it is likely to function in some aspects of cellular RNA processing (By similarity).</text>
</comment>
<comment type="catalytic activity">
    <reaction>
        <text>a 3'-end 3'-phospho-ribonucleotide-RNA + ATP = a 3'-end 2',3'-cyclophospho-ribonucleotide-RNA + AMP + diphosphate</text>
        <dbReference type="Rhea" id="RHEA:23976"/>
        <dbReference type="Rhea" id="RHEA-COMP:10463"/>
        <dbReference type="Rhea" id="RHEA-COMP:10464"/>
        <dbReference type="ChEBI" id="CHEBI:30616"/>
        <dbReference type="ChEBI" id="CHEBI:33019"/>
        <dbReference type="ChEBI" id="CHEBI:83062"/>
        <dbReference type="ChEBI" id="CHEBI:83064"/>
        <dbReference type="ChEBI" id="CHEBI:456215"/>
        <dbReference type="EC" id="6.5.1.4"/>
    </reaction>
</comment>
<comment type="subcellular location">
    <subcellularLocation>
        <location evidence="2">Cytoplasm</location>
    </subcellularLocation>
</comment>
<comment type="similarity">
    <text evidence="2">Belongs to the RNA 3'-terminal cyclase family. Type 1 subfamily.</text>
</comment>
<comment type="sequence caution" evidence="2">
    <conflict type="erroneous initiation">
        <sequence resource="EMBL-CDS" id="BAA30639"/>
    </conflict>
</comment>
<reference key="1">
    <citation type="journal article" date="1998" name="DNA Res.">
        <title>Complete sequence and gene organization of the genome of a hyper-thermophilic archaebacterium, Pyrococcus horikoshii OT3.</title>
        <authorList>
            <person name="Kawarabayasi Y."/>
            <person name="Sawada M."/>
            <person name="Horikawa H."/>
            <person name="Haikawa Y."/>
            <person name="Hino Y."/>
            <person name="Yamamoto S."/>
            <person name="Sekine M."/>
            <person name="Baba S."/>
            <person name="Kosugi H."/>
            <person name="Hosoyama A."/>
            <person name="Nagai Y."/>
            <person name="Sakai M."/>
            <person name="Ogura K."/>
            <person name="Otsuka R."/>
            <person name="Nakazawa H."/>
            <person name="Takamiya M."/>
            <person name="Ohfuku Y."/>
            <person name="Funahashi T."/>
            <person name="Tanaka T."/>
            <person name="Kudoh Y."/>
            <person name="Yamazaki J."/>
            <person name="Kushida N."/>
            <person name="Oguchi A."/>
            <person name="Aoki K."/>
            <person name="Yoshizawa T."/>
            <person name="Nakamura Y."/>
            <person name="Robb F.T."/>
            <person name="Horikoshi K."/>
            <person name="Masuchi Y."/>
            <person name="Shizuya H."/>
            <person name="Kikuchi H."/>
        </authorList>
    </citation>
    <scope>NUCLEOTIDE SEQUENCE [LARGE SCALE GENOMIC DNA]</scope>
    <source>
        <strain>ATCC 700860 / DSM 12428 / JCM 9974 / NBRC 100139 / OT-3</strain>
    </source>
</reference>
<proteinExistence type="evidence at protein level"/>
<dbReference type="EC" id="6.5.1.4"/>
<dbReference type="EMBL" id="BA000001">
    <property type="protein sequence ID" value="BAA30639.1"/>
    <property type="status" value="ALT_INIT"/>
    <property type="molecule type" value="Genomic_DNA"/>
</dbReference>
<dbReference type="PIR" id="G71029">
    <property type="entry name" value="G71029"/>
</dbReference>
<dbReference type="RefSeq" id="WP_048053416.1">
    <property type="nucleotide sequence ID" value="NC_000961.1"/>
</dbReference>
<dbReference type="PDB" id="4O89">
    <property type="method" value="X-ray"/>
    <property type="resolution" value="1.90 A"/>
    <property type="chains" value="A/B=1-341"/>
</dbReference>
<dbReference type="PDB" id="4O8J">
    <property type="method" value="X-ray"/>
    <property type="resolution" value="2.04 A"/>
    <property type="chains" value="A/B=1-341"/>
</dbReference>
<dbReference type="PDBsum" id="4O89"/>
<dbReference type="PDBsum" id="4O8J"/>
<dbReference type="SMR" id="O59198"/>
<dbReference type="STRING" id="70601.gene:9378514"/>
<dbReference type="EnsemblBacteria" id="BAA30639">
    <property type="protein sequence ID" value="BAA30639"/>
    <property type="gene ID" value="BAA30639"/>
</dbReference>
<dbReference type="GeneID" id="1443845"/>
<dbReference type="KEGG" id="pho:PH1529"/>
<dbReference type="eggNOG" id="arCOG04125">
    <property type="taxonomic scope" value="Archaea"/>
</dbReference>
<dbReference type="OrthoDB" id="7994at2157"/>
<dbReference type="BRENDA" id="6.5.1.4">
    <property type="organism ID" value="5244"/>
</dbReference>
<dbReference type="EvolutionaryTrace" id="O59198"/>
<dbReference type="Proteomes" id="UP000000752">
    <property type="component" value="Chromosome"/>
</dbReference>
<dbReference type="GO" id="GO:0005737">
    <property type="term" value="C:cytoplasm"/>
    <property type="evidence" value="ECO:0007669"/>
    <property type="project" value="UniProtKB-SubCell"/>
</dbReference>
<dbReference type="GO" id="GO:0005524">
    <property type="term" value="F:ATP binding"/>
    <property type="evidence" value="ECO:0007669"/>
    <property type="project" value="UniProtKB-KW"/>
</dbReference>
<dbReference type="GO" id="GO:0003963">
    <property type="term" value="F:RNA-3'-phosphate cyclase activity"/>
    <property type="evidence" value="ECO:0007669"/>
    <property type="project" value="UniProtKB-UniRule"/>
</dbReference>
<dbReference type="GO" id="GO:0006396">
    <property type="term" value="P:RNA processing"/>
    <property type="evidence" value="ECO:0007669"/>
    <property type="project" value="InterPro"/>
</dbReference>
<dbReference type="CDD" id="cd00874">
    <property type="entry name" value="RNA_Cyclase_Class_II"/>
    <property type="match status" value="1"/>
</dbReference>
<dbReference type="FunFam" id="3.30.360.20:FF:000002">
    <property type="entry name" value="RNA terminal phosphate cyclase-like 1"/>
    <property type="match status" value="1"/>
</dbReference>
<dbReference type="Gene3D" id="3.65.10.20">
    <property type="entry name" value="RNA 3'-terminal phosphate cyclase domain"/>
    <property type="match status" value="1"/>
</dbReference>
<dbReference type="Gene3D" id="3.30.360.20">
    <property type="entry name" value="RNA 3'-terminal phosphate cyclase, insert domain"/>
    <property type="match status" value="1"/>
</dbReference>
<dbReference type="HAMAP" id="MF_00200">
    <property type="entry name" value="RTC"/>
    <property type="match status" value="1"/>
</dbReference>
<dbReference type="InterPro" id="IPR013791">
    <property type="entry name" value="RNA3'-term_phos_cycl_insert"/>
</dbReference>
<dbReference type="InterPro" id="IPR023797">
    <property type="entry name" value="RNA3'_phos_cyclase_dom"/>
</dbReference>
<dbReference type="InterPro" id="IPR037136">
    <property type="entry name" value="RNA3'_phos_cyclase_dom_sf"/>
</dbReference>
<dbReference type="InterPro" id="IPR000228">
    <property type="entry name" value="RNA3'_term_phos_cyc"/>
</dbReference>
<dbReference type="InterPro" id="IPR017770">
    <property type="entry name" value="RNA3'_term_phos_cyc_type_1"/>
</dbReference>
<dbReference type="InterPro" id="IPR020719">
    <property type="entry name" value="RNA3'_term_phos_cycl-like_CS"/>
</dbReference>
<dbReference type="InterPro" id="IPR013792">
    <property type="entry name" value="RNA3'P_cycl/enolpyr_Trfase_a/b"/>
</dbReference>
<dbReference type="InterPro" id="IPR036553">
    <property type="entry name" value="RPTC_insert"/>
</dbReference>
<dbReference type="NCBIfam" id="TIGR03399">
    <property type="entry name" value="RNA_3prim_cycl"/>
    <property type="match status" value="1"/>
</dbReference>
<dbReference type="PANTHER" id="PTHR11096">
    <property type="entry name" value="RNA 3' TERMINAL PHOSPHATE CYCLASE"/>
    <property type="match status" value="1"/>
</dbReference>
<dbReference type="PANTHER" id="PTHR11096:SF0">
    <property type="entry name" value="RNA 3'-TERMINAL PHOSPHATE CYCLASE"/>
    <property type="match status" value="1"/>
</dbReference>
<dbReference type="Pfam" id="PF01137">
    <property type="entry name" value="RTC"/>
    <property type="match status" value="1"/>
</dbReference>
<dbReference type="Pfam" id="PF05189">
    <property type="entry name" value="RTC_insert"/>
    <property type="match status" value="1"/>
</dbReference>
<dbReference type="PIRSF" id="PIRSF005378">
    <property type="entry name" value="RNA3'_term_phos_cycl_euk"/>
    <property type="match status" value="1"/>
</dbReference>
<dbReference type="SUPFAM" id="SSF55205">
    <property type="entry name" value="EPT/RTPC-like"/>
    <property type="match status" value="1"/>
</dbReference>
<dbReference type="PROSITE" id="PS01287">
    <property type="entry name" value="RTC"/>
    <property type="match status" value="1"/>
</dbReference>
<accession>O59198</accession>
<gene>
    <name type="primary">rtcA</name>
    <name type="ordered locus">PH1529</name>
    <name type="ORF">PHCV028</name>
</gene>